<feature type="chain" id="PRO_1000054239" description="GTP 3',8-cyclase">
    <location>
        <begin position="1"/>
        <end position="328"/>
    </location>
</feature>
<feature type="domain" description="Radical SAM core" evidence="2">
    <location>
        <begin position="1"/>
        <end position="229"/>
    </location>
</feature>
<feature type="binding site" evidence="1">
    <location>
        <position position="8"/>
    </location>
    <ligand>
        <name>GTP</name>
        <dbReference type="ChEBI" id="CHEBI:37565"/>
    </ligand>
</feature>
<feature type="binding site" evidence="1">
    <location>
        <position position="15"/>
    </location>
    <ligand>
        <name>[4Fe-4S] cluster</name>
        <dbReference type="ChEBI" id="CHEBI:49883"/>
        <label>1</label>
        <note>4Fe-4S-S-AdoMet</note>
    </ligand>
</feature>
<feature type="binding site" evidence="1">
    <location>
        <position position="19"/>
    </location>
    <ligand>
        <name>[4Fe-4S] cluster</name>
        <dbReference type="ChEBI" id="CHEBI:49883"/>
        <label>1</label>
        <note>4Fe-4S-S-AdoMet</note>
    </ligand>
</feature>
<feature type="binding site" evidence="1">
    <location>
        <position position="21"/>
    </location>
    <ligand>
        <name>S-adenosyl-L-methionine</name>
        <dbReference type="ChEBI" id="CHEBI:59789"/>
    </ligand>
</feature>
<feature type="binding site" evidence="1">
    <location>
        <position position="22"/>
    </location>
    <ligand>
        <name>[4Fe-4S] cluster</name>
        <dbReference type="ChEBI" id="CHEBI:49883"/>
        <label>1</label>
        <note>4Fe-4S-S-AdoMet</note>
    </ligand>
</feature>
<feature type="binding site" evidence="1">
    <location>
        <position position="60"/>
    </location>
    <ligand>
        <name>GTP</name>
        <dbReference type="ChEBI" id="CHEBI:37565"/>
    </ligand>
</feature>
<feature type="binding site" evidence="1">
    <location>
        <position position="64"/>
    </location>
    <ligand>
        <name>S-adenosyl-L-methionine</name>
        <dbReference type="ChEBI" id="CHEBI:59789"/>
    </ligand>
</feature>
<feature type="binding site" evidence="1">
    <location>
        <position position="91"/>
    </location>
    <ligand>
        <name>GTP</name>
        <dbReference type="ChEBI" id="CHEBI:37565"/>
    </ligand>
</feature>
<feature type="binding site" evidence="1">
    <location>
        <position position="115"/>
    </location>
    <ligand>
        <name>S-adenosyl-L-methionine</name>
        <dbReference type="ChEBI" id="CHEBI:59789"/>
    </ligand>
</feature>
<feature type="binding site" evidence="1">
    <location>
        <position position="155"/>
    </location>
    <ligand>
        <name>GTP</name>
        <dbReference type="ChEBI" id="CHEBI:37565"/>
    </ligand>
</feature>
<feature type="binding site" evidence="1">
    <location>
        <position position="189"/>
    </location>
    <ligand>
        <name>S-adenosyl-L-methionine</name>
        <dbReference type="ChEBI" id="CHEBI:59789"/>
    </ligand>
</feature>
<feature type="binding site" evidence="1">
    <location>
        <position position="252"/>
    </location>
    <ligand>
        <name>[4Fe-4S] cluster</name>
        <dbReference type="ChEBI" id="CHEBI:49883"/>
        <label>2</label>
        <note>4Fe-4S-substrate</note>
    </ligand>
</feature>
<feature type="binding site" evidence="1">
    <location>
        <position position="255"/>
    </location>
    <ligand>
        <name>[4Fe-4S] cluster</name>
        <dbReference type="ChEBI" id="CHEBI:49883"/>
        <label>2</label>
        <note>4Fe-4S-substrate</note>
    </ligand>
</feature>
<feature type="binding site" evidence="1">
    <location>
        <begin position="257"/>
        <end position="259"/>
    </location>
    <ligand>
        <name>GTP</name>
        <dbReference type="ChEBI" id="CHEBI:37565"/>
    </ligand>
</feature>
<feature type="binding site" evidence="1">
    <location>
        <position position="269"/>
    </location>
    <ligand>
        <name>[4Fe-4S] cluster</name>
        <dbReference type="ChEBI" id="CHEBI:49883"/>
        <label>2</label>
        <note>4Fe-4S-substrate</note>
    </ligand>
</feature>
<gene>
    <name evidence="1" type="primary">moaA</name>
    <name type="ordered locus">Tery_0308</name>
</gene>
<dbReference type="EC" id="4.1.99.22" evidence="1"/>
<dbReference type="EMBL" id="CP000393">
    <property type="protein sequence ID" value="ABG49785.1"/>
    <property type="molecule type" value="Genomic_DNA"/>
</dbReference>
<dbReference type="RefSeq" id="WP_011610181.1">
    <property type="nucleotide sequence ID" value="NC_008312.1"/>
</dbReference>
<dbReference type="SMR" id="Q119N9"/>
<dbReference type="STRING" id="203124.Tery_0308"/>
<dbReference type="KEGG" id="ter:Tery_0308"/>
<dbReference type="eggNOG" id="COG2896">
    <property type="taxonomic scope" value="Bacteria"/>
</dbReference>
<dbReference type="HOGENOM" id="CLU_009273_0_1_3"/>
<dbReference type="OrthoDB" id="9763993at2"/>
<dbReference type="UniPathway" id="UPA00344"/>
<dbReference type="GO" id="GO:0051539">
    <property type="term" value="F:4 iron, 4 sulfur cluster binding"/>
    <property type="evidence" value="ECO:0007669"/>
    <property type="project" value="UniProtKB-UniRule"/>
</dbReference>
<dbReference type="GO" id="GO:0061799">
    <property type="term" value="F:cyclic pyranopterin monophosphate synthase activity"/>
    <property type="evidence" value="ECO:0007669"/>
    <property type="project" value="TreeGrafter"/>
</dbReference>
<dbReference type="GO" id="GO:0061798">
    <property type="term" value="F:GTP 3',8'-cyclase activity"/>
    <property type="evidence" value="ECO:0007669"/>
    <property type="project" value="UniProtKB-UniRule"/>
</dbReference>
<dbReference type="GO" id="GO:0005525">
    <property type="term" value="F:GTP binding"/>
    <property type="evidence" value="ECO:0007669"/>
    <property type="project" value="UniProtKB-UniRule"/>
</dbReference>
<dbReference type="GO" id="GO:0046872">
    <property type="term" value="F:metal ion binding"/>
    <property type="evidence" value="ECO:0007669"/>
    <property type="project" value="UniProtKB-KW"/>
</dbReference>
<dbReference type="GO" id="GO:1904047">
    <property type="term" value="F:S-adenosyl-L-methionine binding"/>
    <property type="evidence" value="ECO:0007669"/>
    <property type="project" value="UniProtKB-UniRule"/>
</dbReference>
<dbReference type="GO" id="GO:0006777">
    <property type="term" value="P:Mo-molybdopterin cofactor biosynthetic process"/>
    <property type="evidence" value="ECO:0007669"/>
    <property type="project" value="UniProtKB-UniRule"/>
</dbReference>
<dbReference type="CDD" id="cd01335">
    <property type="entry name" value="Radical_SAM"/>
    <property type="match status" value="1"/>
</dbReference>
<dbReference type="CDD" id="cd21117">
    <property type="entry name" value="Twitch_MoaA"/>
    <property type="match status" value="1"/>
</dbReference>
<dbReference type="Gene3D" id="3.20.20.70">
    <property type="entry name" value="Aldolase class I"/>
    <property type="match status" value="1"/>
</dbReference>
<dbReference type="HAMAP" id="MF_01225_B">
    <property type="entry name" value="MoaA_B"/>
    <property type="match status" value="1"/>
</dbReference>
<dbReference type="InterPro" id="IPR013785">
    <property type="entry name" value="Aldolase_TIM"/>
</dbReference>
<dbReference type="InterPro" id="IPR006638">
    <property type="entry name" value="Elp3/MiaA/NifB-like_rSAM"/>
</dbReference>
<dbReference type="InterPro" id="IPR013483">
    <property type="entry name" value="MoaA"/>
</dbReference>
<dbReference type="InterPro" id="IPR000385">
    <property type="entry name" value="MoaA_NifB_PqqE_Fe-S-bd_CS"/>
</dbReference>
<dbReference type="InterPro" id="IPR010505">
    <property type="entry name" value="MoaA_twitch"/>
</dbReference>
<dbReference type="InterPro" id="IPR050105">
    <property type="entry name" value="MoCo_biosynth_MoaA/MoaC"/>
</dbReference>
<dbReference type="InterPro" id="IPR007197">
    <property type="entry name" value="rSAM"/>
</dbReference>
<dbReference type="NCBIfam" id="TIGR02666">
    <property type="entry name" value="moaA"/>
    <property type="match status" value="1"/>
</dbReference>
<dbReference type="PANTHER" id="PTHR22960:SF0">
    <property type="entry name" value="MOLYBDENUM COFACTOR BIOSYNTHESIS PROTEIN 1"/>
    <property type="match status" value="1"/>
</dbReference>
<dbReference type="PANTHER" id="PTHR22960">
    <property type="entry name" value="MOLYBDOPTERIN COFACTOR SYNTHESIS PROTEIN A"/>
    <property type="match status" value="1"/>
</dbReference>
<dbReference type="Pfam" id="PF13353">
    <property type="entry name" value="Fer4_12"/>
    <property type="match status" value="1"/>
</dbReference>
<dbReference type="Pfam" id="PF06463">
    <property type="entry name" value="Mob_synth_C"/>
    <property type="match status" value="1"/>
</dbReference>
<dbReference type="Pfam" id="PF04055">
    <property type="entry name" value="Radical_SAM"/>
    <property type="match status" value="1"/>
</dbReference>
<dbReference type="SFLD" id="SFLDG01383">
    <property type="entry name" value="cyclic_pyranopterin_phosphate"/>
    <property type="match status" value="1"/>
</dbReference>
<dbReference type="SFLD" id="SFLDG01386">
    <property type="entry name" value="main_SPASM_domain-containing"/>
    <property type="match status" value="1"/>
</dbReference>
<dbReference type="SMART" id="SM00729">
    <property type="entry name" value="Elp3"/>
    <property type="match status" value="1"/>
</dbReference>
<dbReference type="SUPFAM" id="SSF102114">
    <property type="entry name" value="Radical SAM enzymes"/>
    <property type="match status" value="1"/>
</dbReference>
<dbReference type="PROSITE" id="PS01305">
    <property type="entry name" value="MOAA_NIFB_PQQE"/>
    <property type="match status" value="1"/>
</dbReference>
<dbReference type="PROSITE" id="PS51918">
    <property type="entry name" value="RADICAL_SAM"/>
    <property type="match status" value="1"/>
</dbReference>
<evidence type="ECO:0000255" key="1">
    <source>
        <dbReference type="HAMAP-Rule" id="MF_01225"/>
    </source>
</evidence>
<evidence type="ECO:0000255" key="2">
    <source>
        <dbReference type="PROSITE-ProRule" id="PRU01266"/>
    </source>
</evidence>
<organism>
    <name type="scientific">Trichodesmium erythraeum (strain IMS101)</name>
    <dbReference type="NCBI Taxonomy" id="203124"/>
    <lineage>
        <taxon>Bacteria</taxon>
        <taxon>Bacillati</taxon>
        <taxon>Cyanobacteriota</taxon>
        <taxon>Cyanophyceae</taxon>
        <taxon>Oscillatoriophycideae</taxon>
        <taxon>Oscillatoriales</taxon>
        <taxon>Microcoleaceae</taxon>
        <taxon>Trichodesmium</taxon>
    </lineage>
</organism>
<sequence>MNTVDYLRISLIDRCNFRCQYCMPEGAEIDYILKQDLLTDNELLSLLKEVFIPVGFTRFRLTGGEPLLRPNVIGLIEAIASFPETKDLSMTTNGFLLSKMAKDLYKAGLRRINISLDTLDSDTFNLIIGNKNRSHWQLVWNGIQAAYEVGFDPLKINVVIIPGVNDHEVLDLAALTINRNWHIRFIEFMPIGNDKLFDNKGWISSEELRQIIRKKWGLTESFVPGNGPADIFQIPGAKGTLGFISQMSECFCDRCNRMRLSADGWLRPCLLNEIGQIDLKSSLRNGISVEELRQQVEYLLGLKPEINFKQRESGTTGIYSRTMSQIGG</sequence>
<keyword id="KW-0004">4Fe-4S</keyword>
<keyword id="KW-0342">GTP-binding</keyword>
<keyword id="KW-0408">Iron</keyword>
<keyword id="KW-0411">Iron-sulfur</keyword>
<keyword id="KW-0456">Lyase</keyword>
<keyword id="KW-0479">Metal-binding</keyword>
<keyword id="KW-0501">Molybdenum cofactor biosynthesis</keyword>
<keyword id="KW-0547">Nucleotide-binding</keyword>
<keyword id="KW-0949">S-adenosyl-L-methionine</keyword>
<name>MOAA_TRIEI</name>
<protein>
    <recommendedName>
        <fullName evidence="1">GTP 3',8-cyclase</fullName>
        <ecNumber evidence="1">4.1.99.22</ecNumber>
    </recommendedName>
    <alternativeName>
        <fullName evidence="1">Molybdenum cofactor biosynthesis protein A</fullName>
    </alternativeName>
</protein>
<reference key="1">
    <citation type="journal article" date="2015" name="Proc. Natl. Acad. Sci. U.S.A.">
        <title>Trichodesmium genome maintains abundant, widespread noncoding DNA in situ, despite oligotrophic lifestyle.</title>
        <authorList>
            <person name="Walworth N."/>
            <person name="Pfreundt U."/>
            <person name="Nelson W.C."/>
            <person name="Mincer T."/>
            <person name="Heidelberg J.F."/>
            <person name="Fu F."/>
            <person name="Waterbury J.B."/>
            <person name="Glavina del Rio T."/>
            <person name="Goodwin L."/>
            <person name="Kyrpides N.C."/>
            <person name="Land M.L."/>
            <person name="Woyke T."/>
            <person name="Hutchins D.A."/>
            <person name="Hess W.R."/>
            <person name="Webb E.A."/>
        </authorList>
    </citation>
    <scope>NUCLEOTIDE SEQUENCE [LARGE SCALE GENOMIC DNA]</scope>
    <source>
        <strain>IMS101</strain>
    </source>
</reference>
<accession>Q119N9</accession>
<proteinExistence type="inferred from homology"/>
<comment type="function">
    <text evidence="1">Catalyzes the cyclization of GTP to (8S)-3',8-cyclo-7,8-dihydroguanosine 5'-triphosphate.</text>
</comment>
<comment type="catalytic activity">
    <reaction evidence="1">
        <text>GTP + AH2 + S-adenosyl-L-methionine = (8S)-3',8-cyclo-7,8-dihydroguanosine 5'-triphosphate + 5'-deoxyadenosine + L-methionine + A + H(+)</text>
        <dbReference type="Rhea" id="RHEA:49576"/>
        <dbReference type="ChEBI" id="CHEBI:13193"/>
        <dbReference type="ChEBI" id="CHEBI:15378"/>
        <dbReference type="ChEBI" id="CHEBI:17319"/>
        <dbReference type="ChEBI" id="CHEBI:17499"/>
        <dbReference type="ChEBI" id="CHEBI:37565"/>
        <dbReference type="ChEBI" id="CHEBI:57844"/>
        <dbReference type="ChEBI" id="CHEBI:59789"/>
        <dbReference type="ChEBI" id="CHEBI:131766"/>
        <dbReference type="EC" id="4.1.99.22"/>
    </reaction>
</comment>
<comment type="cofactor">
    <cofactor evidence="1">
        <name>[4Fe-4S] cluster</name>
        <dbReference type="ChEBI" id="CHEBI:49883"/>
    </cofactor>
    <text evidence="1">Binds 2 [4Fe-4S] clusters. Binds 1 [4Fe-4S] cluster coordinated with 3 cysteines and an exchangeable S-adenosyl-L-methionine and 1 [4Fe-4S] cluster coordinated with 3 cysteines and the GTP-derived substrate.</text>
</comment>
<comment type="pathway">
    <text evidence="1">Cofactor biosynthesis; molybdopterin biosynthesis.</text>
</comment>
<comment type="subunit">
    <text evidence="1">Monomer and homodimer.</text>
</comment>
<comment type="similarity">
    <text evidence="1">Belongs to the radical SAM superfamily. MoaA family.</text>
</comment>